<comment type="similarity">
    <text evidence="2">Belongs to the peptidase S66 family.</text>
</comment>
<keyword id="KW-0121">Carboxypeptidase</keyword>
<keyword id="KW-0378">Hydrolase</keyword>
<keyword id="KW-0645">Protease</keyword>
<keyword id="KW-1185">Reference proteome</keyword>
<keyword id="KW-0720">Serine protease</keyword>
<dbReference type="EC" id="3.4.16.-"/>
<dbReference type="EMBL" id="U70661">
    <property type="protein sequence ID" value="AAB38706.1"/>
    <property type="molecule type" value="Genomic_DNA"/>
</dbReference>
<dbReference type="EMBL" id="AE000520">
    <property type="protein sequence ID" value="AAC65657.1"/>
    <property type="molecule type" value="Genomic_DNA"/>
</dbReference>
<dbReference type="PIR" id="E71292">
    <property type="entry name" value="E71292"/>
</dbReference>
<dbReference type="RefSeq" id="WP_010882133.1">
    <property type="nucleotide sequence ID" value="NC_021490.2"/>
</dbReference>
<dbReference type="SMR" id="P96129"/>
<dbReference type="IntAct" id="P96129">
    <property type="interactions" value="12"/>
</dbReference>
<dbReference type="STRING" id="243276.TP_0688"/>
<dbReference type="MEROPS" id="S66.003"/>
<dbReference type="EnsemblBacteria" id="AAC65657">
    <property type="protein sequence ID" value="AAC65657"/>
    <property type="gene ID" value="TP_0688"/>
</dbReference>
<dbReference type="KEGG" id="tpa:TP_0688"/>
<dbReference type="KEGG" id="tpw:TPANIC_0688"/>
<dbReference type="eggNOG" id="COG1619">
    <property type="taxonomic scope" value="Bacteria"/>
</dbReference>
<dbReference type="HOGENOM" id="CLU_034346_1_1_12"/>
<dbReference type="OrthoDB" id="9807329at2"/>
<dbReference type="Proteomes" id="UP000000811">
    <property type="component" value="Chromosome"/>
</dbReference>
<dbReference type="GO" id="GO:0004180">
    <property type="term" value="F:carboxypeptidase activity"/>
    <property type="evidence" value="ECO:0007669"/>
    <property type="project" value="UniProtKB-KW"/>
</dbReference>
<dbReference type="GO" id="GO:0008236">
    <property type="term" value="F:serine-type peptidase activity"/>
    <property type="evidence" value="ECO:0007669"/>
    <property type="project" value="UniProtKB-KW"/>
</dbReference>
<dbReference type="GO" id="GO:0006508">
    <property type="term" value="P:proteolysis"/>
    <property type="evidence" value="ECO:0007669"/>
    <property type="project" value="UniProtKB-KW"/>
</dbReference>
<dbReference type="CDD" id="cd07062">
    <property type="entry name" value="Peptidase_S66_mccF_like"/>
    <property type="match status" value="1"/>
</dbReference>
<dbReference type="Gene3D" id="3.40.50.10740">
    <property type="entry name" value="Class I glutamine amidotransferase-like"/>
    <property type="match status" value="1"/>
</dbReference>
<dbReference type="Gene3D" id="3.50.30.60">
    <property type="entry name" value="LD-carboxypeptidase A C-terminal domain-like"/>
    <property type="match status" value="1"/>
</dbReference>
<dbReference type="InterPro" id="IPR027461">
    <property type="entry name" value="Carboxypeptidase_A_C_sf"/>
</dbReference>
<dbReference type="InterPro" id="IPR029062">
    <property type="entry name" value="Class_I_gatase-like"/>
</dbReference>
<dbReference type="InterPro" id="IPR027478">
    <property type="entry name" value="LdcA_N"/>
</dbReference>
<dbReference type="InterPro" id="IPR040449">
    <property type="entry name" value="Peptidase_S66_N"/>
</dbReference>
<dbReference type="InterPro" id="IPR040921">
    <property type="entry name" value="Peptidase_S66C"/>
</dbReference>
<dbReference type="InterPro" id="IPR003507">
    <property type="entry name" value="S66_fam"/>
</dbReference>
<dbReference type="PANTHER" id="PTHR30237:SF6">
    <property type="entry name" value="CARBOXYPEPTIDASE YOCD-RELATED"/>
    <property type="match status" value="1"/>
</dbReference>
<dbReference type="PANTHER" id="PTHR30237">
    <property type="entry name" value="MURAMOYLTETRAPEPTIDE CARBOXYPEPTIDASE"/>
    <property type="match status" value="1"/>
</dbReference>
<dbReference type="Pfam" id="PF02016">
    <property type="entry name" value="Peptidase_S66"/>
    <property type="match status" value="1"/>
</dbReference>
<dbReference type="Pfam" id="PF17676">
    <property type="entry name" value="Peptidase_S66C"/>
    <property type="match status" value="1"/>
</dbReference>
<dbReference type="PIRSF" id="PIRSF028757">
    <property type="entry name" value="LD-carboxypeptidase"/>
    <property type="match status" value="1"/>
</dbReference>
<dbReference type="SUPFAM" id="SSF52317">
    <property type="entry name" value="Class I glutamine amidotransferase-like"/>
    <property type="match status" value="1"/>
</dbReference>
<dbReference type="SUPFAM" id="SSF141986">
    <property type="entry name" value="LD-carboxypeptidase A C-terminal domain-like"/>
    <property type="match status" value="1"/>
</dbReference>
<organism>
    <name type="scientific">Treponema pallidum (strain Nichols)</name>
    <dbReference type="NCBI Taxonomy" id="243276"/>
    <lineage>
        <taxon>Bacteria</taxon>
        <taxon>Pseudomonadati</taxon>
        <taxon>Spirochaetota</taxon>
        <taxon>Spirochaetia</taxon>
        <taxon>Spirochaetales</taxon>
        <taxon>Treponemataceae</taxon>
        <taxon>Treponema</taxon>
    </lineage>
</organism>
<protein>
    <recommendedName>
        <fullName>Putative carboxypeptidase TP_0688</fullName>
        <ecNumber>3.4.16.-</ecNumber>
    </recommendedName>
</protein>
<accession>P96129</accession>
<gene>
    <name type="ordered locus">TP_0688</name>
</gene>
<feature type="chain" id="PRO_0000172847" description="Putative carboxypeptidase TP_0688">
    <location>
        <begin position="1"/>
        <end position="337"/>
    </location>
</feature>
<feature type="active site" description="Nucleophile" evidence="1">
    <location>
        <position position="118"/>
    </location>
</feature>
<feature type="active site" description="Charge relay system" evidence="1">
    <location>
        <position position="234"/>
    </location>
</feature>
<feature type="active site" description="Charge relay system" evidence="1">
    <location>
        <position position="302"/>
    </location>
</feature>
<reference key="1">
    <citation type="submission" date="1996-09" db="EMBL/GenBank/DDBJ databases">
        <authorList>
            <person name="Stamm L.V."/>
            <person name="Barnes N.Y."/>
        </authorList>
    </citation>
    <scope>NUCLEOTIDE SEQUENCE [GENOMIC DNA]</scope>
    <source>
        <strain>Nichols</strain>
    </source>
</reference>
<reference key="2">
    <citation type="journal article" date="1998" name="Science">
        <title>Complete genome sequence of Treponema pallidum, the syphilis spirochete.</title>
        <authorList>
            <person name="Fraser C.M."/>
            <person name="Norris S.J."/>
            <person name="Weinstock G.M."/>
            <person name="White O."/>
            <person name="Sutton G.G."/>
            <person name="Dodson R.J."/>
            <person name="Gwinn M.L."/>
            <person name="Hickey E.K."/>
            <person name="Clayton R.A."/>
            <person name="Ketchum K.A."/>
            <person name="Sodergren E."/>
            <person name="Hardham J.M."/>
            <person name="McLeod M.P."/>
            <person name="Salzberg S.L."/>
            <person name="Peterson J.D."/>
            <person name="Khalak H.G."/>
            <person name="Richardson D.L."/>
            <person name="Howell J.K."/>
            <person name="Chidambaram M."/>
            <person name="Utterback T.R."/>
            <person name="McDonald L.A."/>
            <person name="Artiach P."/>
            <person name="Bowman C."/>
            <person name="Cotton M.D."/>
            <person name="Fujii C."/>
            <person name="Garland S.A."/>
            <person name="Hatch B."/>
            <person name="Horst K."/>
            <person name="Roberts K.M."/>
            <person name="Sandusky M."/>
            <person name="Weidman J.F."/>
            <person name="Smith H.O."/>
            <person name="Venter J.C."/>
        </authorList>
    </citation>
    <scope>NUCLEOTIDE SEQUENCE [LARGE SCALE GENOMIC DNA]</scope>
    <source>
        <strain>Nichols</strain>
    </source>
</reference>
<sequence length="337" mass="37958">MQDEGVDMKKLLLRSSDEVRVIAPSCSMRKIDSSVIERAQERFRCLGLNVAFGDHVYDEDFLGSASVDKRVADLHAAFADKKVKLILTAIGGFNSNQLLQHIDYALLKKNPKLLCGFSDVTALLNAIHAKTGMPVFYGPHFSTFGMEKGIEFTIECFKNTFFYGRCDILASETWSDDMWFKDQEHRQFITNPGYEIIHRGDMVGMGVGGNISTFNLLAGTEYEPSLKKSILFIEDTSRMSITDFDRHLEALTQRDDFCTVRGILIGRFQKDSGIDMDMLRKIISRKKALDAIPLFANVDFGHTTPHCILPIGGMIRVNVDRKCITVQLHSSVEQLPE</sequence>
<name>Y688_TREPA</name>
<evidence type="ECO:0000250" key="1"/>
<evidence type="ECO:0000305" key="2"/>
<proteinExistence type="inferred from homology"/>